<evidence type="ECO:0000255" key="1">
    <source>
        <dbReference type="HAMAP-Rule" id="MF_00412"/>
    </source>
</evidence>
<sequence>MDAQAYLLQLGQAAKSSGFALANLGVMAKNRLLGRVAAELKSAFDEILAANAKDVAAARASGLGDAMVDRLLLNDDRLKGIIADIDNVISLADPIGEEFDSRLLDNGMRLCRRRVPLGVIGVIYEARPNVTVEIAVLALKTGNAVILRGGKETLESNLALAAAIRRALAGEGLPEDCVQLIDNPDRALVTGLLKLDKFVDMIVPRGGQGLQRLCAEQATIPVILGGIGICHLYLDRDADISRAANVIINAKVQRPTVCNALDTLLIHRDKLDWLPTLARALQQQGVKLVACEQSLGALAAAGIEAEAASDESFGTEWLSLTLGVKVVADIDEAIAHIRHYSSGHSEAILTDNLAAATHFMNEVNSAAVYLNASTRFTDGGQFGFGAEVAVSTQKLHARGPMGLEALTTYKWLGVGDYSCR</sequence>
<dbReference type="EC" id="1.2.1.41" evidence="1"/>
<dbReference type="EMBL" id="CP000507">
    <property type="protein sequence ID" value="ABM00718.1"/>
    <property type="molecule type" value="Genomic_DNA"/>
</dbReference>
<dbReference type="RefSeq" id="WP_011760624.1">
    <property type="nucleotide sequence ID" value="NC_008700.1"/>
</dbReference>
<dbReference type="SMR" id="A1S8L1"/>
<dbReference type="STRING" id="326297.Sama_2515"/>
<dbReference type="KEGG" id="saz:Sama_2515"/>
<dbReference type="eggNOG" id="COG0014">
    <property type="taxonomic scope" value="Bacteria"/>
</dbReference>
<dbReference type="HOGENOM" id="CLU_030231_0_0_6"/>
<dbReference type="OrthoDB" id="9809970at2"/>
<dbReference type="UniPathway" id="UPA00098">
    <property type="reaction ID" value="UER00360"/>
</dbReference>
<dbReference type="Proteomes" id="UP000009175">
    <property type="component" value="Chromosome"/>
</dbReference>
<dbReference type="GO" id="GO:0005737">
    <property type="term" value="C:cytoplasm"/>
    <property type="evidence" value="ECO:0007669"/>
    <property type="project" value="UniProtKB-SubCell"/>
</dbReference>
<dbReference type="GO" id="GO:0004350">
    <property type="term" value="F:glutamate-5-semialdehyde dehydrogenase activity"/>
    <property type="evidence" value="ECO:0007669"/>
    <property type="project" value="UniProtKB-UniRule"/>
</dbReference>
<dbReference type="GO" id="GO:0050661">
    <property type="term" value="F:NADP binding"/>
    <property type="evidence" value="ECO:0007669"/>
    <property type="project" value="InterPro"/>
</dbReference>
<dbReference type="GO" id="GO:0055129">
    <property type="term" value="P:L-proline biosynthetic process"/>
    <property type="evidence" value="ECO:0007669"/>
    <property type="project" value="UniProtKB-UniRule"/>
</dbReference>
<dbReference type="CDD" id="cd07079">
    <property type="entry name" value="ALDH_F18-19_ProA-GPR"/>
    <property type="match status" value="1"/>
</dbReference>
<dbReference type="FunFam" id="3.40.309.10:FF:000006">
    <property type="entry name" value="Gamma-glutamyl phosphate reductase"/>
    <property type="match status" value="1"/>
</dbReference>
<dbReference type="Gene3D" id="3.40.605.10">
    <property type="entry name" value="Aldehyde Dehydrogenase, Chain A, domain 1"/>
    <property type="match status" value="1"/>
</dbReference>
<dbReference type="Gene3D" id="3.40.309.10">
    <property type="entry name" value="Aldehyde Dehydrogenase, Chain A, domain 2"/>
    <property type="match status" value="1"/>
</dbReference>
<dbReference type="HAMAP" id="MF_00412">
    <property type="entry name" value="ProA"/>
    <property type="match status" value="1"/>
</dbReference>
<dbReference type="InterPro" id="IPR016161">
    <property type="entry name" value="Ald_DH/histidinol_DH"/>
</dbReference>
<dbReference type="InterPro" id="IPR016163">
    <property type="entry name" value="Ald_DH_C"/>
</dbReference>
<dbReference type="InterPro" id="IPR016162">
    <property type="entry name" value="Ald_DH_N"/>
</dbReference>
<dbReference type="InterPro" id="IPR015590">
    <property type="entry name" value="Aldehyde_DH_dom"/>
</dbReference>
<dbReference type="InterPro" id="IPR020593">
    <property type="entry name" value="G-glutamylP_reductase_CS"/>
</dbReference>
<dbReference type="InterPro" id="IPR012134">
    <property type="entry name" value="Glu-5-SA_DH"/>
</dbReference>
<dbReference type="InterPro" id="IPR000965">
    <property type="entry name" value="GPR_dom"/>
</dbReference>
<dbReference type="NCBIfam" id="NF001221">
    <property type="entry name" value="PRK00197.1"/>
    <property type="match status" value="1"/>
</dbReference>
<dbReference type="NCBIfam" id="TIGR00407">
    <property type="entry name" value="proA"/>
    <property type="match status" value="1"/>
</dbReference>
<dbReference type="PANTHER" id="PTHR11063:SF8">
    <property type="entry name" value="DELTA-1-PYRROLINE-5-CARBOXYLATE SYNTHASE"/>
    <property type="match status" value="1"/>
</dbReference>
<dbReference type="PANTHER" id="PTHR11063">
    <property type="entry name" value="GLUTAMATE SEMIALDEHYDE DEHYDROGENASE"/>
    <property type="match status" value="1"/>
</dbReference>
<dbReference type="Pfam" id="PF00171">
    <property type="entry name" value="Aldedh"/>
    <property type="match status" value="1"/>
</dbReference>
<dbReference type="PIRSF" id="PIRSF000151">
    <property type="entry name" value="GPR"/>
    <property type="match status" value="1"/>
</dbReference>
<dbReference type="SUPFAM" id="SSF53720">
    <property type="entry name" value="ALDH-like"/>
    <property type="match status" value="1"/>
</dbReference>
<dbReference type="PROSITE" id="PS01223">
    <property type="entry name" value="PROA"/>
    <property type="match status" value="1"/>
</dbReference>
<feature type="chain" id="PRO_0000340914" description="Gamma-glutamyl phosphate reductase">
    <location>
        <begin position="1"/>
        <end position="420"/>
    </location>
</feature>
<keyword id="KW-0028">Amino-acid biosynthesis</keyword>
<keyword id="KW-0963">Cytoplasm</keyword>
<keyword id="KW-0521">NADP</keyword>
<keyword id="KW-0560">Oxidoreductase</keyword>
<keyword id="KW-0641">Proline biosynthesis</keyword>
<keyword id="KW-1185">Reference proteome</keyword>
<comment type="function">
    <text evidence="1">Catalyzes the NADPH-dependent reduction of L-glutamate 5-phosphate into L-glutamate 5-semialdehyde and phosphate. The product spontaneously undergoes cyclization to form 1-pyrroline-5-carboxylate.</text>
</comment>
<comment type="catalytic activity">
    <reaction evidence="1">
        <text>L-glutamate 5-semialdehyde + phosphate + NADP(+) = L-glutamyl 5-phosphate + NADPH + H(+)</text>
        <dbReference type="Rhea" id="RHEA:19541"/>
        <dbReference type="ChEBI" id="CHEBI:15378"/>
        <dbReference type="ChEBI" id="CHEBI:43474"/>
        <dbReference type="ChEBI" id="CHEBI:57783"/>
        <dbReference type="ChEBI" id="CHEBI:58066"/>
        <dbReference type="ChEBI" id="CHEBI:58274"/>
        <dbReference type="ChEBI" id="CHEBI:58349"/>
        <dbReference type="EC" id="1.2.1.41"/>
    </reaction>
</comment>
<comment type="pathway">
    <text evidence="1">Amino-acid biosynthesis; L-proline biosynthesis; L-glutamate 5-semialdehyde from L-glutamate: step 2/2.</text>
</comment>
<comment type="subcellular location">
    <subcellularLocation>
        <location evidence="1">Cytoplasm</location>
    </subcellularLocation>
</comment>
<comment type="similarity">
    <text evidence="1">Belongs to the gamma-glutamyl phosphate reductase family.</text>
</comment>
<accession>A1S8L1</accession>
<name>PROA_SHEAM</name>
<gene>
    <name evidence="1" type="primary">proA</name>
    <name type="ordered locus">Sama_2515</name>
</gene>
<organism>
    <name type="scientific">Shewanella amazonensis (strain ATCC BAA-1098 / SB2B)</name>
    <dbReference type="NCBI Taxonomy" id="326297"/>
    <lineage>
        <taxon>Bacteria</taxon>
        <taxon>Pseudomonadati</taxon>
        <taxon>Pseudomonadota</taxon>
        <taxon>Gammaproteobacteria</taxon>
        <taxon>Alteromonadales</taxon>
        <taxon>Shewanellaceae</taxon>
        <taxon>Shewanella</taxon>
    </lineage>
</organism>
<reference key="1">
    <citation type="submission" date="2006-12" db="EMBL/GenBank/DDBJ databases">
        <title>Complete sequence of Shewanella amazonensis SB2B.</title>
        <authorList>
            <consortium name="US DOE Joint Genome Institute"/>
            <person name="Copeland A."/>
            <person name="Lucas S."/>
            <person name="Lapidus A."/>
            <person name="Barry K."/>
            <person name="Detter J.C."/>
            <person name="Glavina del Rio T."/>
            <person name="Hammon N."/>
            <person name="Israni S."/>
            <person name="Dalin E."/>
            <person name="Tice H."/>
            <person name="Pitluck S."/>
            <person name="Munk A.C."/>
            <person name="Brettin T."/>
            <person name="Bruce D."/>
            <person name="Han C."/>
            <person name="Tapia R."/>
            <person name="Gilna P."/>
            <person name="Schmutz J."/>
            <person name="Larimer F."/>
            <person name="Land M."/>
            <person name="Hauser L."/>
            <person name="Kyrpides N."/>
            <person name="Mikhailova N."/>
            <person name="Fredrickson J."/>
            <person name="Richardson P."/>
        </authorList>
    </citation>
    <scope>NUCLEOTIDE SEQUENCE [LARGE SCALE GENOMIC DNA]</scope>
    <source>
        <strain>ATCC BAA-1098 / SB2B</strain>
    </source>
</reference>
<proteinExistence type="inferred from homology"/>
<protein>
    <recommendedName>
        <fullName evidence="1">Gamma-glutamyl phosphate reductase</fullName>
        <shortName evidence="1">GPR</shortName>
        <ecNumber evidence="1">1.2.1.41</ecNumber>
    </recommendedName>
    <alternativeName>
        <fullName evidence="1">Glutamate-5-semialdehyde dehydrogenase</fullName>
    </alternativeName>
    <alternativeName>
        <fullName evidence="1">Glutamyl-gamma-semialdehyde dehydrogenase</fullName>
        <shortName evidence="1">GSA dehydrogenase</shortName>
    </alternativeName>
</protein>